<comment type="function">
    <text evidence="1">Involved in the biosynthesis of isoprenoids. Catalyzes the 1,3-allylic rearrangement of the homoallylic substrate isopentenyl (IPP) to its allylic isomer, dimethylallyl diphosphate (DMAPP).</text>
</comment>
<comment type="catalytic activity">
    <reaction evidence="1">
        <text>isopentenyl diphosphate = dimethylallyl diphosphate</text>
        <dbReference type="Rhea" id="RHEA:23284"/>
        <dbReference type="ChEBI" id="CHEBI:57623"/>
        <dbReference type="ChEBI" id="CHEBI:128769"/>
        <dbReference type="EC" id="5.3.3.2"/>
    </reaction>
</comment>
<comment type="cofactor">
    <cofactor evidence="1">
        <name>FMN</name>
        <dbReference type="ChEBI" id="CHEBI:58210"/>
    </cofactor>
</comment>
<comment type="cofactor">
    <cofactor evidence="1">
        <name>NADPH</name>
        <dbReference type="ChEBI" id="CHEBI:57783"/>
    </cofactor>
</comment>
<comment type="cofactor">
    <cofactor evidence="1">
        <name>Mg(2+)</name>
        <dbReference type="ChEBI" id="CHEBI:18420"/>
    </cofactor>
</comment>
<comment type="subunit">
    <text evidence="1">Homooctamer. Dimer of tetramers.</text>
</comment>
<comment type="subcellular location">
    <subcellularLocation>
        <location evidence="1">Cytoplasm</location>
    </subcellularLocation>
</comment>
<comment type="similarity">
    <text evidence="1">Belongs to the IPP isomerase type 2 family.</text>
</comment>
<protein>
    <recommendedName>
        <fullName evidence="1">Isopentenyl-diphosphate delta-isomerase</fullName>
        <shortName evidence="1">IPP isomerase</shortName>
        <ecNumber evidence="1">5.3.3.2</ecNumber>
    </recommendedName>
    <alternativeName>
        <fullName evidence="1">Isopentenyl diphosphate:dimethylallyl diphosphate isomerase</fullName>
    </alternativeName>
    <alternativeName>
        <fullName evidence="1">Isopentenyl pyrophosphate isomerase</fullName>
    </alternativeName>
    <alternativeName>
        <fullName evidence="1">Type 2 isopentenyl diphosphate isomerase</fullName>
        <shortName evidence="1">IDI-2</shortName>
    </alternativeName>
</protein>
<accession>B3QQG6</accession>
<proteinExistence type="inferred from homology"/>
<dbReference type="EC" id="5.3.3.2" evidence="1"/>
<dbReference type="EMBL" id="CP001099">
    <property type="protein sequence ID" value="ACF12169.1"/>
    <property type="molecule type" value="Genomic_DNA"/>
</dbReference>
<dbReference type="RefSeq" id="WP_012503002.1">
    <property type="nucleotide sequence ID" value="NC_011027.1"/>
</dbReference>
<dbReference type="SMR" id="B3QQG6"/>
<dbReference type="STRING" id="517417.Cpar_1777"/>
<dbReference type="KEGG" id="cpc:Cpar_1777"/>
<dbReference type="eggNOG" id="COG1304">
    <property type="taxonomic scope" value="Bacteria"/>
</dbReference>
<dbReference type="HOGENOM" id="CLU_065515_1_0_10"/>
<dbReference type="OrthoDB" id="9795032at2"/>
<dbReference type="Proteomes" id="UP000008811">
    <property type="component" value="Chromosome"/>
</dbReference>
<dbReference type="GO" id="GO:0005737">
    <property type="term" value="C:cytoplasm"/>
    <property type="evidence" value="ECO:0007669"/>
    <property type="project" value="UniProtKB-SubCell"/>
</dbReference>
<dbReference type="GO" id="GO:0010181">
    <property type="term" value="F:FMN binding"/>
    <property type="evidence" value="ECO:0007669"/>
    <property type="project" value="UniProtKB-UniRule"/>
</dbReference>
<dbReference type="GO" id="GO:0004452">
    <property type="term" value="F:isopentenyl-diphosphate delta-isomerase activity"/>
    <property type="evidence" value="ECO:0007669"/>
    <property type="project" value="UniProtKB-UniRule"/>
</dbReference>
<dbReference type="GO" id="GO:0000287">
    <property type="term" value="F:magnesium ion binding"/>
    <property type="evidence" value="ECO:0007669"/>
    <property type="project" value="UniProtKB-UniRule"/>
</dbReference>
<dbReference type="GO" id="GO:0070402">
    <property type="term" value="F:NADPH binding"/>
    <property type="evidence" value="ECO:0007669"/>
    <property type="project" value="UniProtKB-UniRule"/>
</dbReference>
<dbReference type="GO" id="GO:0016491">
    <property type="term" value="F:oxidoreductase activity"/>
    <property type="evidence" value="ECO:0007669"/>
    <property type="project" value="InterPro"/>
</dbReference>
<dbReference type="GO" id="GO:0008299">
    <property type="term" value="P:isoprenoid biosynthetic process"/>
    <property type="evidence" value="ECO:0007669"/>
    <property type="project" value="UniProtKB-UniRule"/>
</dbReference>
<dbReference type="CDD" id="cd02811">
    <property type="entry name" value="IDI-2_FMN"/>
    <property type="match status" value="1"/>
</dbReference>
<dbReference type="Gene3D" id="3.20.20.70">
    <property type="entry name" value="Aldolase class I"/>
    <property type="match status" value="1"/>
</dbReference>
<dbReference type="HAMAP" id="MF_00354">
    <property type="entry name" value="Idi_2"/>
    <property type="match status" value="1"/>
</dbReference>
<dbReference type="InterPro" id="IPR013785">
    <property type="entry name" value="Aldolase_TIM"/>
</dbReference>
<dbReference type="InterPro" id="IPR000262">
    <property type="entry name" value="FMN-dep_DH"/>
</dbReference>
<dbReference type="InterPro" id="IPR011179">
    <property type="entry name" value="IPdP_isomerase"/>
</dbReference>
<dbReference type="NCBIfam" id="TIGR02151">
    <property type="entry name" value="IPP_isom_2"/>
    <property type="match status" value="1"/>
</dbReference>
<dbReference type="PANTHER" id="PTHR43665">
    <property type="entry name" value="ISOPENTENYL-DIPHOSPHATE DELTA-ISOMERASE"/>
    <property type="match status" value="1"/>
</dbReference>
<dbReference type="PANTHER" id="PTHR43665:SF1">
    <property type="entry name" value="ISOPENTENYL-DIPHOSPHATE DELTA-ISOMERASE"/>
    <property type="match status" value="1"/>
</dbReference>
<dbReference type="Pfam" id="PF01070">
    <property type="entry name" value="FMN_dh"/>
    <property type="match status" value="1"/>
</dbReference>
<dbReference type="PIRSF" id="PIRSF003314">
    <property type="entry name" value="IPP_isomerase"/>
    <property type="match status" value="1"/>
</dbReference>
<dbReference type="SMART" id="SM01240">
    <property type="entry name" value="IMPDH"/>
    <property type="match status" value="1"/>
</dbReference>
<dbReference type="SUPFAM" id="SSF51395">
    <property type="entry name" value="FMN-linked oxidoreductases"/>
    <property type="match status" value="1"/>
</dbReference>
<feature type="chain" id="PRO_1000120542" description="Isopentenyl-diphosphate delta-isomerase">
    <location>
        <begin position="1"/>
        <end position="357"/>
    </location>
</feature>
<feature type="binding site" evidence="1">
    <location>
        <begin position="12"/>
        <end position="13"/>
    </location>
    <ligand>
        <name>substrate</name>
    </ligand>
</feature>
<feature type="binding site" evidence="1">
    <location>
        <position position="70"/>
    </location>
    <ligand>
        <name>FMN</name>
        <dbReference type="ChEBI" id="CHEBI:58210"/>
    </ligand>
</feature>
<feature type="binding site" evidence="1">
    <location>
        <begin position="71"/>
        <end position="73"/>
    </location>
    <ligand>
        <name>FMN</name>
        <dbReference type="ChEBI" id="CHEBI:58210"/>
    </ligand>
</feature>
<feature type="binding site" evidence="1">
    <location>
        <begin position="101"/>
        <end position="103"/>
    </location>
    <ligand>
        <name>substrate</name>
    </ligand>
</feature>
<feature type="binding site" evidence="1">
    <location>
        <position position="101"/>
    </location>
    <ligand>
        <name>FMN</name>
        <dbReference type="ChEBI" id="CHEBI:58210"/>
    </ligand>
</feature>
<feature type="binding site" evidence="1">
    <location>
        <position position="130"/>
    </location>
    <ligand>
        <name>FMN</name>
        <dbReference type="ChEBI" id="CHEBI:58210"/>
    </ligand>
</feature>
<feature type="binding site" evidence="1">
    <location>
        <position position="165"/>
    </location>
    <ligand>
        <name>substrate</name>
    </ligand>
</feature>
<feature type="binding site" evidence="1">
    <location>
        <position position="166"/>
    </location>
    <ligand>
        <name>Mg(2+)</name>
        <dbReference type="ChEBI" id="CHEBI:18420"/>
    </ligand>
</feature>
<feature type="binding site" evidence="1">
    <location>
        <position position="197"/>
    </location>
    <ligand>
        <name>FMN</name>
        <dbReference type="ChEBI" id="CHEBI:58210"/>
    </ligand>
</feature>
<feature type="binding site" evidence="1">
    <location>
        <begin position="289"/>
        <end position="291"/>
    </location>
    <ligand>
        <name>FMN</name>
        <dbReference type="ChEBI" id="CHEBI:58210"/>
    </ligand>
</feature>
<feature type="binding site" evidence="1">
    <location>
        <begin position="310"/>
        <end position="311"/>
    </location>
    <ligand>
        <name>FMN</name>
        <dbReference type="ChEBI" id="CHEBI:58210"/>
    </ligand>
</feature>
<organism>
    <name type="scientific">Chlorobaculum parvum (strain DSM 263 / NCIMB 8327)</name>
    <name type="common">Chlorobium vibrioforme subsp. thiosulfatophilum</name>
    <dbReference type="NCBI Taxonomy" id="517417"/>
    <lineage>
        <taxon>Bacteria</taxon>
        <taxon>Pseudomonadati</taxon>
        <taxon>Chlorobiota</taxon>
        <taxon>Chlorobiia</taxon>
        <taxon>Chlorobiales</taxon>
        <taxon>Chlorobiaceae</taxon>
        <taxon>Chlorobaculum</taxon>
    </lineage>
</organism>
<name>IDI2_CHLP8</name>
<evidence type="ECO:0000255" key="1">
    <source>
        <dbReference type="HAMAP-Rule" id="MF_00354"/>
    </source>
</evidence>
<keyword id="KW-0963">Cytoplasm</keyword>
<keyword id="KW-0285">Flavoprotein</keyword>
<keyword id="KW-0288">FMN</keyword>
<keyword id="KW-0413">Isomerase</keyword>
<keyword id="KW-0414">Isoprene biosynthesis</keyword>
<keyword id="KW-0460">Magnesium</keyword>
<keyword id="KW-0479">Metal-binding</keyword>
<keyword id="KW-0521">NADP</keyword>
<gene>
    <name evidence="1" type="primary">fni</name>
    <name type="ordered locus">Cpar_1777</name>
</gene>
<sequence>MQETSATITAERKHSHVDVCLNRPVCFDGQDTGLDAWRFEHNAAPEIDFAEIDLTAEFLGHAIGMPLMISSMTGGYGDALALNRTLAEAAERFRIPLGVGSMRQALEGNSHRESFSIVRSSAPSVPIFANIGAPEVAAGLSREQLSTLVELIEADGLIVHLNPAQELFQPEGSTNFRGFLDRLHDITATINVPVIAKEVGCGISAPLASKLADAGVKAIDVAGAGGISWQKVEECRYLDRFGNEERFSPSALDEFLNWGIPTAECLTGIAALKEKSPEYGSLAVISSGGIRNGLDVAKSIALGADIAASAQHLLKALRAGTLEETIRTWANDLRAAMFLTGSATTAQLKHAPIYRKP</sequence>
<reference key="1">
    <citation type="submission" date="2008-06" db="EMBL/GenBank/DDBJ databases">
        <title>Complete sequence of Chlorobaculum parvum NCIB 8327.</title>
        <authorList>
            <consortium name="US DOE Joint Genome Institute"/>
            <person name="Lucas S."/>
            <person name="Copeland A."/>
            <person name="Lapidus A."/>
            <person name="Glavina del Rio T."/>
            <person name="Dalin E."/>
            <person name="Tice H."/>
            <person name="Bruce D."/>
            <person name="Goodwin L."/>
            <person name="Pitluck S."/>
            <person name="Schmutz J."/>
            <person name="Larimer F."/>
            <person name="Land M."/>
            <person name="Hauser L."/>
            <person name="Kyrpides N."/>
            <person name="Mikhailova N."/>
            <person name="Zhao F."/>
            <person name="Li T."/>
            <person name="Liu Z."/>
            <person name="Overmann J."/>
            <person name="Bryant D.A."/>
            <person name="Richardson P."/>
        </authorList>
    </citation>
    <scope>NUCLEOTIDE SEQUENCE [LARGE SCALE GENOMIC DNA]</scope>
    <source>
        <strain>DSM 263 / NCIMB 8327</strain>
    </source>
</reference>